<sequence length="71" mass="7811">MGMRMMVTVFLLGVLATTVVSLRSNRASDGRRGIVNKLNDLVPQYWTECCGRIGPHCSRCICPEVVCPKNG</sequence>
<accession>P0CY78</accession>
<dbReference type="GO" id="GO:0005576">
    <property type="term" value="C:extracellular region"/>
    <property type="evidence" value="ECO:0007669"/>
    <property type="project" value="UniProtKB-SubCell"/>
</dbReference>
<dbReference type="GO" id="GO:0030550">
    <property type="term" value="F:acetylcholine receptor inhibitor activity"/>
    <property type="evidence" value="ECO:0007669"/>
    <property type="project" value="InterPro"/>
</dbReference>
<dbReference type="GO" id="GO:0099106">
    <property type="term" value="F:ion channel regulator activity"/>
    <property type="evidence" value="ECO:0007669"/>
    <property type="project" value="UniProtKB-KW"/>
</dbReference>
<dbReference type="GO" id="GO:0090729">
    <property type="term" value="F:toxin activity"/>
    <property type="evidence" value="ECO:0007669"/>
    <property type="project" value="UniProtKB-KW"/>
</dbReference>
<dbReference type="InterPro" id="IPR009958">
    <property type="entry name" value="Conotoxin_a-typ"/>
</dbReference>
<dbReference type="Pfam" id="PF07365">
    <property type="entry name" value="Toxin_8"/>
    <property type="match status" value="1"/>
</dbReference>
<proteinExistence type="evidence at transcript level"/>
<organism>
    <name type="scientific">Conus bullatus</name>
    <name type="common">Bubble cone</name>
    <dbReference type="NCBI Taxonomy" id="89438"/>
    <lineage>
        <taxon>Eukaryota</taxon>
        <taxon>Metazoa</taxon>
        <taxon>Spiralia</taxon>
        <taxon>Lophotrochozoa</taxon>
        <taxon>Mollusca</taxon>
        <taxon>Gastropoda</taxon>
        <taxon>Caenogastropoda</taxon>
        <taxon>Neogastropoda</taxon>
        <taxon>Conoidea</taxon>
        <taxon>Conidae</taxon>
        <taxon>Conus</taxon>
        <taxon>Textilia</taxon>
    </lineage>
</organism>
<feature type="signal peptide" evidence="2">
    <location>
        <begin position="1"/>
        <end position="21"/>
    </location>
</feature>
<feature type="propeptide" id="PRO_0000409971" evidence="1">
    <location>
        <begin position="22"/>
        <end position="37"/>
    </location>
</feature>
<feature type="peptide" id="PRO_0000409972" description="Conotoxin Bu23">
    <location>
        <begin position="38"/>
        <end position="70"/>
    </location>
</feature>
<feature type="modified residue" description="Asparagine amide" evidence="1">
    <location>
        <position position="70"/>
    </location>
</feature>
<keyword id="KW-0027">Amidation</keyword>
<keyword id="KW-1015">Disulfide bond</keyword>
<keyword id="KW-0872">Ion channel impairing toxin</keyword>
<keyword id="KW-0528">Neurotoxin</keyword>
<keyword id="KW-0964">Secreted</keyword>
<keyword id="KW-0732">Signal</keyword>
<keyword id="KW-0800">Toxin</keyword>
<protein>
    <recommendedName>
        <fullName>Conotoxin Bu23</fullName>
    </recommendedName>
</protein>
<evidence type="ECO:0000250" key="1"/>
<evidence type="ECO:0000255" key="2"/>
<evidence type="ECO:0000305" key="3"/>
<name>CA423_CONBU</name>
<reference key="1">
    <citation type="journal article" date="2011" name="BMC Genomics">
        <title>Characterization of the Conus bullatus genome and its venom-duct transcriptome.</title>
        <authorList>
            <person name="Hu H."/>
            <person name="Bandyopadhyay P.K."/>
            <person name="Olivera B.M."/>
            <person name="Yandell M."/>
        </authorList>
    </citation>
    <scope>NUCLEOTIDE SEQUENCE [MRNA]</scope>
    <source>
        <tissue>Venom duct</tissue>
    </source>
</reference>
<comment type="subcellular location">
    <subcellularLocation>
        <location evidence="1">Secreted</location>
    </subcellularLocation>
</comment>
<comment type="tissue specificity">
    <text>Expressed by the venom duct.</text>
</comment>
<comment type="domain">
    <text>The cysteine framework is IV (CC-C-C-C-C).</text>
</comment>
<comment type="PTM">
    <text evidence="1">Contains 3 disulfide bonds (By similarity). They are not indicated here, since framework IV presents two different connectivities (I-V, II-III, IV-VI and I-III, II-V, IV-VI).</text>
</comment>
<comment type="similarity">
    <text evidence="3">Belongs to the conotoxin A superfamily.</text>
</comment>